<evidence type="ECO:0000255" key="1">
    <source>
        <dbReference type="HAMAP-Rule" id="MF_01325"/>
    </source>
</evidence>
<evidence type="ECO:0000305" key="2"/>
<comment type="function">
    <text evidence="1">One of the primary rRNA binding proteins, it binds directly near the 3'-end of the 23S rRNA, where it nucleates assembly of the 50S subunit.</text>
</comment>
<comment type="subunit">
    <text evidence="1">Part of the 50S ribosomal subunit. Forms a cluster with proteins L14 and L19.</text>
</comment>
<comment type="PTM">
    <text evidence="1">Methylated by PrmB.</text>
</comment>
<comment type="similarity">
    <text evidence="1">Belongs to the universal ribosomal protein uL3 family.</text>
</comment>
<proteinExistence type="inferred from homology"/>
<accession>B8F755</accession>
<dbReference type="EMBL" id="CP001321">
    <property type="protein sequence ID" value="ACL33157.1"/>
    <property type="molecule type" value="Genomic_DNA"/>
</dbReference>
<dbReference type="RefSeq" id="WP_010786462.1">
    <property type="nucleotide sequence ID" value="NC_011852.1"/>
</dbReference>
<dbReference type="SMR" id="B8F755"/>
<dbReference type="STRING" id="557723.HAPS_1606"/>
<dbReference type="GeneID" id="66619887"/>
<dbReference type="KEGG" id="hap:HAPS_1606"/>
<dbReference type="HOGENOM" id="CLU_044142_4_1_6"/>
<dbReference type="Proteomes" id="UP000006743">
    <property type="component" value="Chromosome"/>
</dbReference>
<dbReference type="GO" id="GO:0022625">
    <property type="term" value="C:cytosolic large ribosomal subunit"/>
    <property type="evidence" value="ECO:0007669"/>
    <property type="project" value="TreeGrafter"/>
</dbReference>
<dbReference type="GO" id="GO:0019843">
    <property type="term" value="F:rRNA binding"/>
    <property type="evidence" value="ECO:0007669"/>
    <property type="project" value="UniProtKB-UniRule"/>
</dbReference>
<dbReference type="GO" id="GO:0003735">
    <property type="term" value="F:structural constituent of ribosome"/>
    <property type="evidence" value="ECO:0007669"/>
    <property type="project" value="InterPro"/>
</dbReference>
<dbReference type="GO" id="GO:0006412">
    <property type="term" value="P:translation"/>
    <property type="evidence" value="ECO:0007669"/>
    <property type="project" value="UniProtKB-UniRule"/>
</dbReference>
<dbReference type="FunFam" id="2.40.30.10:FF:000004">
    <property type="entry name" value="50S ribosomal protein L3"/>
    <property type="match status" value="1"/>
</dbReference>
<dbReference type="FunFam" id="3.30.160.810:FF:000001">
    <property type="entry name" value="50S ribosomal protein L3"/>
    <property type="match status" value="1"/>
</dbReference>
<dbReference type="Gene3D" id="3.30.160.810">
    <property type="match status" value="1"/>
</dbReference>
<dbReference type="Gene3D" id="2.40.30.10">
    <property type="entry name" value="Translation factors"/>
    <property type="match status" value="1"/>
</dbReference>
<dbReference type="HAMAP" id="MF_01325_B">
    <property type="entry name" value="Ribosomal_uL3_B"/>
    <property type="match status" value="1"/>
</dbReference>
<dbReference type="InterPro" id="IPR000597">
    <property type="entry name" value="Ribosomal_uL3"/>
</dbReference>
<dbReference type="InterPro" id="IPR019927">
    <property type="entry name" value="Ribosomal_uL3_bac/org-type"/>
</dbReference>
<dbReference type="InterPro" id="IPR019926">
    <property type="entry name" value="Ribosomal_uL3_CS"/>
</dbReference>
<dbReference type="InterPro" id="IPR009000">
    <property type="entry name" value="Transl_B-barrel_sf"/>
</dbReference>
<dbReference type="NCBIfam" id="TIGR03625">
    <property type="entry name" value="L3_bact"/>
    <property type="match status" value="1"/>
</dbReference>
<dbReference type="PANTHER" id="PTHR11229">
    <property type="entry name" value="50S RIBOSOMAL PROTEIN L3"/>
    <property type="match status" value="1"/>
</dbReference>
<dbReference type="PANTHER" id="PTHR11229:SF16">
    <property type="entry name" value="LARGE RIBOSOMAL SUBUNIT PROTEIN UL3C"/>
    <property type="match status" value="1"/>
</dbReference>
<dbReference type="Pfam" id="PF00297">
    <property type="entry name" value="Ribosomal_L3"/>
    <property type="match status" value="1"/>
</dbReference>
<dbReference type="SUPFAM" id="SSF50447">
    <property type="entry name" value="Translation proteins"/>
    <property type="match status" value="1"/>
</dbReference>
<dbReference type="PROSITE" id="PS00474">
    <property type="entry name" value="RIBOSOMAL_L3"/>
    <property type="match status" value="1"/>
</dbReference>
<feature type="chain" id="PRO_1000165888" description="Large ribosomal subunit protein uL3">
    <location>
        <begin position="1"/>
        <end position="208"/>
    </location>
</feature>
<feature type="modified residue" description="N5-methylglutamine" evidence="1">
    <location>
        <position position="149"/>
    </location>
</feature>
<protein>
    <recommendedName>
        <fullName evidence="1">Large ribosomal subunit protein uL3</fullName>
    </recommendedName>
    <alternativeName>
        <fullName evidence="2">50S ribosomal protein L3</fullName>
    </alternativeName>
</protein>
<sequence>MIGLVGRKVGMTRIFNEDGVSIPVTVIEIEANRVTQVKTLENDGYTAVQVTTGSKKASRVTKPEAGHFVKAGVEAGRGLWEFRTEGEEFTLGQEINVDIFTDVKKVDVTGTSKGKGFQGGVKRWNFRTQDATHGNSLSHRVLGSIGQNQTPGRVFKGKKMAGHLGAERVTVQSLEVVRVDAERKLLLVKGSVPGATNSDVIVKPAVKA</sequence>
<gene>
    <name evidence="1" type="primary">rplC</name>
    <name type="ordered locus">HAPS_1606</name>
</gene>
<organism>
    <name type="scientific">Glaesserella parasuis serovar 5 (strain SH0165)</name>
    <name type="common">Haemophilus parasuis</name>
    <dbReference type="NCBI Taxonomy" id="557723"/>
    <lineage>
        <taxon>Bacteria</taxon>
        <taxon>Pseudomonadati</taxon>
        <taxon>Pseudomonadota</taxon>
        <taxon>Gammaproteobacteria</taxon>
        <taxon>Pasteurellales</taxon>
        <taxon>Pasteurellaceae</taxon>
        <taxon>Glaesserella</taxon>
    </lineage>
</organism>
<name>RL3_GLAP5</name>
<reference key="1">
    <citation type="journal article" date="2009" name="J. Bacteriol.">
        <title>Complete genome sequence of Haemophilus parasuis SH0165.</title>
        <authorList>
            <person name="Yue M."/>
            <person name="Yang F."/>
            <person name="Yang J."/>
            <person name="Bei W."/>
            <person name="Cai X."/>
            <person name="Chen L."/>
            <person name="Dong J."/>
            <person name="Zhou R."/>
            <person name="Jin M."/>
            <person name="Jin Q."/>
            <person name="Chen H."/>
        </authorList>
    </citation>
    <scope>NUCLEOTIDE SEQUENCE [LARGE SCALE GENOMIC DNA]</scope>
    <source>
        <strain>SH0165</strain>
    </source>
</reference>
<keyword id="KW-0488">Methylation</keyword>
<keyword id="KW-1185">Reference proteome</keyword>
<keyword id="KW-0687">Ribonucleoprotein</keyword>
<keyword id="KW-0689">Ribosomal protein</keyword>
<keyword id="KW-0694">RNA-binding</keyword>
<keyword id="KW-0699">rRNA-binding</keyword>